<gene>
    <name evidence="1" type="primary">rlmE</name>
    <name evidence="1" type="synonym">ftsJ</name>
    <name evidence="1" type="synonym">rrmJ</name>
    <name type="ordered locus">BOV_A0642</name>
</gene>
<feature type="chain" id="PRO_0000333319" description="Ribosomal RNA large subunit methyltransferase E">
    <location>
        <begin position="1"/>
        <end position="240"/>
    </location>
</feature>
<feature type="region of interest" description="Disordered" evidence="2">
    <location>
        <begin position="1"/>
        <end position="40"/>
    </location>
</feature>
<feature type="compositionally biased region" description="Gly residues" evidence="2">
    <location>
        <begin position="1"/>
        <end position="20"/>
    </location>
</feature>
<feature type="active site" description="Proton acceptor" evidence="1">
    <location>
        <position position="195"/>
    </location>
</feature>
<feature type="binding site" evidence="1">
    <location>
        <position position="92"/>
    </location>
    <ligand>
        <name>S-adenosyl-L-methionine</name>
        <dbReference type="ChEBI" id="CHEBI:59789"/>
    </ligand>
</feature>
<feature type="binding site" evidence="1">
    <location>
        <position position="94"/>
    </location>
    <ligand>
        <name>S-adenosyl-L-methionine</name>
        <dbReference type="ChEBI" id="CHEBI:59789"/>
    </ligand>
</feature>
<feature type="binding site" evidence="1">
    <location>
        <position position="115"/>
    </location>
    <ligand>
        <name>S-adenosyl-L-methionine</name>
        <dbReference type="ChEBI" id="CHEBI:59789"/>
    </ligand>
</feature>
<feature type="binding site" evidence="1">
    <location>
        <position position="131"/>
    </location>
    <ligand>
        <name>S-adenosyl-L-methionine</name>
        <dbReference type="ChEBI" id="CHEBI:59789"/>
    </ligand>
</feature>
<feature type="binding site" evidence="1">
    <location>
        <position position="155"/>
    </location>
    <ligand>
        <name>S-adenosyl-L-methionine</name>
        <dbReference type="ChEBI" id="CHEBI:59789"/>
    </ligand>
</feature>
<accession>A5VUZ8</accession>
<proteinExistence type="inferred from homology"/>
<keyword id="KW-0963">Cytoplasm</keyword>
<keyword id="KW-0489">Methyltransferase</keyword>
<keyword id="KW-0698">rRNA processing</keyword>
<keyword id="KW-0949">S-adenosyl-L-methionine</keyword>
<keyword id="KW-0808">Transferase</keyword>
<comment type="function">
    <text evidence="1">Specifically methylates the uridine in position 2552 of 23S rRNA at the 2'-O position of the ribose in the fully assembled 50S ribosomal subunit.</text>
</comment>
<comment type="catalytic activity">
    <reaction evidence="1">
        <text>uridine(2552) in 23S rRNA + S-adenosyl-L-methionine = 2'-O-methyluridine(2552) in 23S rRNA + S-adenosyl-L-homocysteine + H(+)</text>
        <dbReference type="Rhea" id="RHEA:42720"/>
        <dbReference type="Rhea" id="RHEA-COMP:10202"/>
        <dbReference type="Rhea" id="RHEA-COMP:10203"/>
        <dbReference type="ChEBI" id="CHEBI:15378"/>
        <dbReference type="ChEBI" id="CHEBI:57856"/>
        <dbReference type="ChEBI" id="CHEBI:59789"/>
        <dbReference type="ChEBI" id="CHEBI:65315"/>
        <dbReference type="ChEBI" id="CHEBI:74478"/>
        <dbReference type="EC" id="2.1.1.166"/>
    </reaction>
</comment>
<comment type="subcellular location">
    <subcellularLocation>
        <location evidence="1">Cytoplasm</location>
    </subcellularLocation>
</comment>
<comment type="similarity">
    <text evidence="1">Belongs to the class I-like SAM-binding methyltransferase superfamily. RNA methyltransferase RlmE family.</text>
</comment>
<comment type="sequence caution" evidence="3">
    <conflict type="erroneous initiation">
        <sequence resource="EMBL-CDS" id="ABQ62430"/>
    </conflict>
</comment>
<sequence>MSKAGGNKGGSRTGGRGGAGSSNLHVRVKKKAGTTKESSRRWLERHLNDPYVHKSRQDGYRSRAAYKLIEINDRYNLLKKGQKIIDLGAAPGGWSQIAARIVGSTDENPQVVGIDYLHVDPLPGVILLEMDFLDDEAPQKLMDALGDKPDLVISDMAAPTTGHRRTDHLRTVHLCEVAADFAVSVLKPGGHFLTKTFQGGTENELLALLKQKFRSVHHVKPPASRAESVELYLLARDFKG</sequence>
<dbReference type="EC" id="2.1.1.166" evidence="1"/>
<dbReference type="EMBL" id="CP000709">
    <property type="protein sequence ID" value="ABQ62430.1"/>
    <property type="status" value="ALT_INIT"/>
    <property type="molecule type" value="Genomic_DNA"/>
</dbReference>
<dbReference type="RefSeq" id="WP_006016207.1">
    <property type="nucleotide sequence ID" value="NC_009504.1"/>
</dbReference>
<dbReference type="SMR" id="A5VUZ8"/>
<dbReference type="GeneID" id="45126025"/>
<dbReference type="KEGG" id="bov:BOV_A0642"/>
<dbReference type="HOGENOM" id="CLU_009422_4_0_5"/>
<dbReference type="PhylomeDB" id="A5VUZ8"/>
<dbReference type="Proteomes" id="UP000006383">
    <property type="component" value="Chromosome II"/>
</dbReference>
<dbReference type="GO" id="GO:0005737">
    <property type="term" value="C:cytoplasm"/>
    <property type="evidence" value="ECO:0007669"/>
    <property type="project" value="UniProtKB-SubCell"/>
</dbReference>
<dbReference type="GO" id="GO:0008650">
    <property type="term" value="F:rRNA (uridine-2'-O-)-methyltransferase activity"/>
    <property type="evidence" value="ECO:0007669"/>
    <property type="project" value="UniProtKB-UniRule"/>
</dbReference>
<dbReference type="Gene3D" id="3.40.50.150">
    <property type="entry name" value="Vaccinia Virus protein VP39"/>
    <property type="match status" value="1"/>
</dbReference>
<dbReference type="HAMAP" id="MF_01547">
    <property type="entry name" value="RNA_methyltr_E"/>
    <property type="match status" value="1"/>
</dbReference>
<dbReference type="InterPro" id="IPR050082">
    <property type="entry name" value="RNA_methyltr_RlmE"/>
</dbReference>
<dbReference type="InterPro" id="IPR002877">
    <property type="entry name" value="RNA_MeTrfase_FtsJ_dom"/>
</dbReference>
<dbReference type="InterPro" id="IPR015507">
    <property type="entry name" value="rRNA-MeTfrase_E"/>
</dbReference>
<dbReference type="InterPro" id="IPR029063">
    <property type="entry name" value="SAM-dependent_MTases_sf"/>
</dbReference>
<dbReference type="PANTHER" id="PTHR10920">
    <property type="entry name" value="RIBOSOMAL RNA METHYLTRANSFERASE"/>
    <property type="match status" value="1"/>
</dbReference>
<dbReference type="PANTHER" id="PTHR10920:SF18">
    <property type="entry name" value="RRNA METHYLTRANSFERASE 2, MITOCHONDRIAL"/>
    <property type="match status" value="1"/>
</dbReference>
<dbReference type="Pfam" id="PF01728">
    <property type="entry name" value="FtsJ"/>
    <property type="match status" value="1"/>
</dbReference>
<dbReference type="PIRSF" id="PIRSF005461">
    <property type="entry name" value="23S_rRNA_mtase"/>
    <property type="match status" value="1"/>
</dbReference>
<dbReference type="SUPFAM" id="SSF53335">
    <property type="entry name" value="S-adenosyl-L-methionine-dependent methyltransferases"/>
    <property type="match status" value="1"/>
</dbReference>
<evidence type="ECO:0000255" key="1">
    <source>
        <dbReference type="HAMAP-Rule" id="MF_01547"/>
    </source>
</evidence>
<evidence type="ECO:0000256" key="2">
    <source>
        <dbReference type="SAM" id="MobiDB-lite"/>
    </source>
</evidence>
<evidence type="ECO:0000305" key="3"/>
<protein>
    <recommendedName>
        <fullName evidence="1">Ribosomal RNA large subunit methyltransferase E</fullName>
        <ecNumber evidence="1">2.1.1.166</ecNumber>
    </recommendedName>
    <alternativeName>
        <fullName evidence="1">23S rRNA Um2552 methyltransferase</fullName>
    </alternativeName>
    <alternativeName>
        <fullName evidence="1">rRNA (uridine-2'-O-)-methyltransferase</fullName>
    </alternativeName>
</protein>
<name>RLME_BRUO2</name>
<organism>
    <name type="scientific">Brucella ovis (strain ATCC 25840 / 63/290 / NCTC 10512)</name>
    <dbReference type="NCBI Taxonomy" id="444178"/>
    <lineage>
        <taxon>Bacteria</taxon>
        <taxon>Pseudomonadati</taxon>
        <taxon>Pseudomonadota</taxon>
        <taxon>Alphaproteobacteria</taxon>
        <taxon>Hyphomicrobiales</taxon>
        <taxon>Brucellaceae</taxon>
        <taxon>Brucella/Ochrobactrum group</taxon>
        <taxon>Brucella</taxon>
    </lineage>
</organism>
<reference key="1">
    <citation type="journal article" date="2009" name="PLoS ONE">
        <title>Genome degradation in Brucella ovis corresponds with narrowing of its host range and tissue tropism.</title>
        <authorList>
            <person name="Tsolis R.M."/>
            <person name="Seshadri R."/>
            <person name="Santos R.L."/>
            <person name="Sangari F.J."/>
            <person name="Lobo J.M."/>
            <person name="de Jong M.F."/>
            <person name="Ren Q."/>
            <person name="Myers G."/>
            <person name="Brinkac L.M."/>
            <person name="Nelson W.C."/>
            <person name="Deboy R.T."/>
            <person name="Angiuoli S."/>
            <person name="Khouri H."/>
            <person name="Dimitrov G."/>
            <person name="Robinson J.R."/>
            <person name="Mulligan S."/>
            <person name="Walker R.L."/>
            <person name="Elzer P.E."/>
            <person name="Hassan K.A."/>
            <person name="Paulsen I.T."/>
        </authorList>
    </citation>
    <scope>NUCLEOTIDE SEQUENCE [LARGE SCALE GENOMIC DNA]</scope>
    <source>
        <strain>ATCC 25840 / 63/290 / NCTC 10512</strain>
    </source>
</reference>